<proteinExistence type="inferred from homology"/>
<organism>
    <name type="scientific">Bacteroides thetaiotaomicron (strain ATCC 29148 / DSM 2079 / JCM 5827 / CCUG 10774 / NCTC 10582 / VPI-5482 / E50)</name>
    <dbReference type="NCBI Taxonomy" id="226186"/>
    <lineage>
        <taxon>Bacteria</taxon>
        <taxon>Pseudomonadati</taxon>
        <taxon>Bacteroidota</taxon>
        <taxon>Bacteroidia</taxon>
        <taxon>Bacteroidales</taxon>
        <taxon>Bacteroidaceae</taxon>
        <taxon>Bacteroides</taxon>
    </lineage>
</organism>
<accession>Q8A639</accession>
<keyword id="KW-0963">Cytoplasm</keyword>
<keyword id="KW-0489">Methyltransferase</keyword>
<keyword id="KW-0545">Nucleotide biosynthesis</keyword>
<keyword id="KW-1185">Reference proteome</keyword>
<keyword id="KW-0808">Transferase</keyword>
<name>TYSY_BACTN</name>
<dbReference type="EC" id="2.1.1.45" evidence="1"/>
<dbReference type="EMBL" id="AE015928">
    <property type="protein sequence ID" value="AAO77154.1"/>
    <property type="molecule type" value="Genomic_DNA"/>
</dbReference>
<dbReference type="RefSeq" id="NP_810960.1">
    <property type="nucleotide sequence ID" value="NC_004663.1"/>
</dbReference>
<dbReference type="RefSeq" id="WP_008761063.1">
    <property type="nucleotide sequence ID" value="NZ_UYXG01000005.1"/>
</dbReference>
<dbReference type="SMR" id="Q8A639"/>
<dbReference type="FunCoup" id="Q8A639">
    <property type="interactions" value="383"/>
</dbReference>
<dbReference type="STRING" id="226186.BT_2047"/>
<dbReference type="PaxDb" id="226186-BT_2047"/>
<dbReference type="EnsemblBacteria" id="AAO77154">
    <property type="protein sequence ID" value="AAO77154"/>
    <property type="gene ID" value="BT_2047"/>
</dbReference>
<dbReference type="KEGG" id="bth:BT_2047"/>
<dbReference type="PATRIC" id="fig|226186.12.peg.2104"/>
<dbReference type="eggNOG" id="COG0207">
    <property type="taxonomic scope" value="Bacteria"/>
</dbReference>
<dbReference type="HOGENOM" id="CLU_021669_0_0_10"/>
<dbReference type="InParanoid" id="Q8A639"/>
<dbReference type="OrthoDB" id="9774633at2"/>
<dbReference type="UniPathway" id="UPA00575"/>
<dbReference type="Proteomes" id="UP000001414">
    <property type="component" value="Chromosome"/>
</dbReference>
<dbReference type="GO" id="GO:0005829">
    <property type="term" value="C:cytosol"/>
    <property type="evidence" value="ECO:0000318"/>
    <property type="project" value="GO_Central"/>
</dbReference>
<dbReference type="GO" id="GO:0004799">
    <property type="term" value="F:thymidylate synthase activity"/>
    <property type="evidence" value="ECO:0000318"/>
    <property type="project" value="GO_Central"/>
</dbReference>
<dbReference type="GO" id="GO:0006231">
    <property type="term" value="P:dTMP biosynthetic process"/>
    <property type="evidence" value="ECO:0000318"/>
    <property type="project" value="GO_Central"/>
</dbReference>
<dbReference type="GO" id="GO:0006235">
    <property type="term" value="P:dTTP biosynthetic process"/>
    <property type="evidence" value="ECO:0007669"/>
    <property type="project" value="UniProtKB-UniRule"/>
</dbReference>
<dbReference type="GO" id="GO:0032259">
    <property type="term" value="P:methylation"/>
    <property type="evidence" value="ECO:0007669"/>
    <property type="project" value="UniProtKB-KW"/>
</dbReference>
<dbReference type="CDD" id="cd00351">
    <property type="entry name" value="TS_Pyrimidine_HMase"/>
    <property type="match status" value="1"/>
</dbReference>
<dbReference type="FunFam" id="3.30.572.10:FF:000001">
    <property type="entry name" value="Thymidylate synthase"/>
    <property type="match status" value="1"/>
</dbReference>
<dbReference type="Gene3D" id="3.30.572.10">
    <property type="entry name" value="Thymidylate synthase/dCMP hydroxymethylase domain"/>
    <property type="match status" value="1"/>
</dbReference>
<dbReference type="HAMAP" id="MF_00008">
    <property type="entry name" value="Thymidy_synth_bact"/>
    <property type="match status" value="1"/>
</dbReference>
<dbReference type="InterPro" id="IPR045097">
    <property type="entry name" value="Thymidate_synth/dCMP_Mease"/>
</dbReference>
<dbReference type="InterPro" id="IPR023451">
    <property type="entry name" value="Thymidate_synth/dCMP_Mease_dom"/>
</dbReference>
<dbReference type="InterPro" id="IPR036926">
    <property type="entry name" value="Thymidate_synth/dCMP_Mease_sf"/>
</dbReference>
<dbReference type="InterPro" id="IPR000398">
    <property type="entry name" value="Thymidylate_synthase"/>
</dbReference>
<dbReference type="InterPro" id="IPR020940">
    <property type="entry name" value="Thymidylate_synthase_AS"/>
</dbReference>
<dbReference type="NCBIfam" id="NF002497">
    <property type="entry name" value="PRK01827.1-3"/>
    <property type="match status" value="1"/>
</dbReference>
<dbReference type="NCBIfam" id="NF002499">
    <property type="entry name" value="PRK01827.1-5"/>
    <property type="match status" value="1"/>
</dbReference>
<dbReference type="NCBIfam" id="TIGR03284">
    <property type="entry name" value="thym_sym"/>
    <property type="match status" value="2"/>
</dbReference>
<dbReference type="PANTHER" id="PTHR11548:SF9">
    <property type="entry name" value="THYMIDYLATE SYNTHASE"/>
    <property type="match status" value="1"/>
</dbReference>
<dbReference type="PANTHER" id="PTHR11548">
    <property type="entry name" value="THYMIDYLATE SYNTHASE 1"/>
    <property type="match status" value="1"/>
</dbReference>
<dbReference type="Pfam" id="PF00303">
    <property type="entry name" value="Thymidylat_synt"/>
    <property type="match status" value="1"/>
</dbReference>
<dbReference type="PRINTS" id="PR00108">
    <property type="entry name" value="THYMDSNTHASE"/>
</dbReference>
<dbReference type="SUPFAM" id="SSF55831">
    <property type="entry name" value="Thymidylate synthase/dCMP hydroxymethylase"/>
    <property type="match status" value="1"/>
</dbReference>
<dbReference type="PROSITE" id="PS00091">
    <property type="entry name" value="THYMIDYLATE_SYNTHASE"/>
    <property type="match status" value="1"/>
</dbReference>
<gene>
    <name evidence="1" type="primary">thyA</name>
    <name type="ordered locus">BT_2047</name>
</gene>
<sequence length="264" mass="30392">MKQYLDLLNRVLTEGTEKSDRTGTGTISVFGHQMRFNLDEGFPCLTTKKLHLKSIIYELLWFLQGDTNAKYLQEHGVRIWNEWADENGDLGHIYGYQWRSWPDYDGGFIDQISEAVETIKHNPDSRRIIVSAWNVADLKNMNLPPCHAFFQFYVADGRLSLQLYQRSADIFLGVPFNIASYALLLQMMAQVTGLKAGEFIHTLGDAHIYLNHLDQVKLQLSREPRALPQMKINPDVKSIYDFQFEDFELVNYDPHPHIAGIVAV</sequence>
<reference key="1">
    <citation type="journal article" date="2003" name="Science">
        <title>A genomic view of the human-Bacteroides thetaiotaomicron symbiosis.</title>
        <authorList>
            <person name="Xu J."/>
            <person name="Bjursell M.K."/>
            <person name="Himrod J."/>
            <person name="Deng S."/>
            <person name="Carmichael L.K."/>
            <person name="Chiang H.C."/>
            <person name="Hooper L.V."/>
            <person name="Gordon J.I."/>
        </authorList>
    </citation>
    <scope>NUCLEOTIDE SEQUENCE [LARGE SCALE GENOMIC DNA]</scope>
    <source>
        <strain>ATCC 29148 / DSM 2079 / JCM 5827 / CCUG 10774 / NCTC 10582 / VPI-5482 / E50</strain>
    </source>
</reference>
<feature type="chain" id="PRO_0000140933" description="Thymidylate synthase">
    <location>
        <begin position="1"/>
        <end position="264"/>
    </location>
</feature>
<feature type="active site" description="Nucleophile" evidence="1">
    <location>
        <position position="146"/>
    </location>
</feature>
<feature type="binding site" description="in other chain" evidence="1">
    <location>
        <position position="21"/>
    </location>
    <ligand>
        <name>dUMP</name>
        <dbReference type="ChEBI" id="CHEBI:246422"/>
        <note>ligand shared between dimeric partners</note>
    </ligand>
</feature>
<feature type="binding site" evidence="1">
    <location>
        <position position="51"/>
    </location>
    <ligand>
        <name>(6R)-5,10-methylene-5,6,7,8-tetrahydrofolate</name>
        <dbReference type="ChEBI" id="CHEBI:15636"/>
    </ligand>
</feature>
<feature type="binding site" evidence="1">
    <location>
        <begin position="126"/>
        <end position="127"/>
    </location>
    <ligand>
        <name>dUMP</name>
        <dbReference type="ChEBI" id="CHEBI:246422"/>
        <note>ligand shared between dimeric partners</note>
    </ligand>
</feature>
<feature type="binding site" description="in other chain" evidence="1">
    <location>
        <begin position="166"/>
        <end position="169"/>
    </location>
    <ligand>
        <name>dUMP</name>
        <dbReference type="ChEBI" id="CHEBI:246422"/>
        <note>ligand shared between dimeric partners</note>
    </ligand>
</feature>
<feature type="binding site" evidence="1">
    <location>
        <position position="169"/>
    </location>
    <ligand>
        <name>(6R)-5,10-methylene-5,6,7,8-tetrahydrofolate</name>
        <dbReference type="ChEBI" id="CHEBI:15636"/>
    </ligand>
</feature>
<feature type="binding site" description="in other chain" evidence="1">
    <location>
        <position position="177"/>
    </location>
    <ligand>
        <name>dUMP</name>
        <dbReference type="ChEBI" id="CHEBI:246422"/>
        <note>ligand shared between dimeric partners</note>
    </ligand>
</feature>
<feature type="binding site" description="in other chain" evidence="1">
    <location>
        <begin position="207"/>
        <end position="209"/>
    </location>
    <ligand>
        <name>dUMP</name>
        <dbReference type="ChEBI" id="CHEBI:246422"/>
        <note>ligand shared between dimeric partners</note>
    </ligand>
</feature>
<feature type="binding site" evidence="1">
    <location>
        <position position="263"/>
    </location>
    <ligand>
        <name>(6R)-5,10-methylene-5,6,7,8-tetrahydrofolate</name>
        <dbReference type="ChEBI" id="CHEBI:15636"/>
    </ligand>
</feature>
<protein>
    <recommendedName>
        <fullName evidence="1">Thymidylate synthase</fullName>
        <shortName evidence="1">TS</shortName>
        <shortName evidence="1">TSase</shortName>
        <ecNumber evidence="1">2.1.1.45</ecNumber>
    </recommendedName>
</protein>
<comment type="function">
    <text evidence="1">Catalyzes the reductive methylation of 2'-deoxyuridine-5'-monophosphate (dUMP) to 2'-deoxythymidine-5'-monophosphate (dTMP) while utilizing 5,10-methylenetetrahydrofolate (mTHF) as the methyl donor and reductant in the reaction, yielding dihydrofolate (DHF) as a by-product. This enzymatic reaction provides an intracellular de novo source of dTMP, an essential precursor for DNA biosynthesis.</text>
</comment>
<comment type="catalytic activity">
    <reaction evidence="1">
        <text>dUMP + (6R)-5,10-methylene-5,6,7,8-tetrahydrofolate = 7,8-dihydrofolate + dTMP</text>
        <dbReference type="Rhea" id="RHEA:12104"/>
        <dbReference type="ChEBI" id="CHEBI:15636"/>
        <dbReference type="ChEBI" id="CHEBI:57451"/>
        <dbReference type="ChEBI" id="CHEBI:63528"/>
        <dbReference type="ChEBI" id="CHEBI:246422"/>
        <dbReference type="EC" id="2.1.1.45"/>
    </reaction>
</comment>
<comment type="pathway">
    <text evidence="1">Pyrimidine metabolism; dTTP biosynthesis.</text>
</comment>
<comment type="subunit">
    <text evidence="1">Homodimer.</text>
</comment>
<comment type="subcellular location">
    <subcellularLocation>
        <location evidence="1">Cytoplasm</location>
    </subcellularLocation>
</comment>
<comment type="similarity">
    <text evidence="1">Belongs to the thymidylate synthase family. Bacterial-type ThyA subfamily.</text>
</comment>
<evidence type="ECO:0000255" key="1">
    <source>
        <dbReference type="HAMAP-Rule" id="MF_00008"/>
    </source>
</evidence>